<organism>
    <name type="scientific">Streptococcus pyogenes serotype M18 (strain MGAS8232)</name>
    <dbReference type="NCBI Taxonomy" id="186103"/>
    <lineage>
        <taxon>Bacteria</taxon>
        <taxon>Bacillati</taxon>
        <taxon>Bacillota</taxon>
        <taxon>Bacilli</taxon>
        <taxon>Lactobacillales</taxon>
        <taxon>Streptococcaceae</taxon>
        <taxon>Streptococcus</taxon>
    </lineage>
</organism>
<name>TSAD_STRP8</name>
<gene>
    <name evidence="1" type="primary">tsaD</name>
    <name type="synonym">gcp</name>
    <name type="ordered locus">spyM18_1937</name>
</gene>
<accession>Q8NZG7</accession>
<reference key="1">
    <citation type="journal article" date="2002" name="Proc. Natl. Acad. Sci. U.S.A.">
        <title>Genome sequence and comparative microarray analysis of serotype M18 group A Streptococcus strains associated with acute rheumatic fever outbreaks.</title>
        <authorList>
            <person name="Smoot J.C."/>
            <person name="Barbian K.D."/>
            <person name="Van Gompel J.J."/>
            <person name="Smoot L.M."/>
            <person name="Chaussee M.S."/>
            <person name="Sylva G.L."/>
            <person name="Sturdevant D.E."/>
            <person name="Ricklefs S.M."/>
            <person name="Porcella S.F."/>
            <person name="Parkins L.D."/>
            <person name="Beres S.B."/>
            <person name="Campbell D.S."/>
            <person name="Smith T.M."/>
            <person name="Zhang Q."/>
            <person name="Kapur V."/>
            <person name="Daly J.A."/>
            <person name="Veasy L.G."/>
            <person name="Musser J.M."/>
        </authorList>
    </citation>
    <scope>NUCLEOTIDE SEQUENCE [LARGE SCALE GENOMIC DNA]</scope>
    <source>
        <strain>MGAS8232</strain>
    </source>
</reference>
<protein>
    <recommendedName>
        <fullName evidence="1">tRNA N6-adenosine threonylcarbamoyltransferase</fullName>
        <ecNumber evidence="1">2.3.1.234</ecNumber>
    </recommendedName>
    <alternativeName>
        <fullName evidence="1">N6-L-threonylcarbamoyladenine synthase</fullName>
        <shortName evidence="1">t(6)A synthase</shortName>
    </alternativeName>
    <alternativeName>
        <fullName evidence="1">t(6)A37 threonylcarbamoyladenosine biosynthesis protein TsaD</fullName>
    </alternativeName>
    <alternativeName>
        <fullName evidence="1">tRNA threonylcarbamoyladenosine biosynthesis protein TsaD</fullName>
    </alternativeName>
</protein>
<comment type="function">
    <text evidence="1">Required for the formation of a threonylcarbamoyl group on adenosine at position 37 (t(6)A37) in tRNAs that read codons beginning with adenine. Is involved in the transfer of the threonylcarbamoyl moiety of threonylcarbamoyl-AMP (TC-AMP) to the N6 group of A37, together with TsaE and TsaB. TsaD likely plays a direct catalytic role in this reaction.</text>
</comment>
<comment type="catalytic activity">
    <reaction evidence="1">
        <text>L-threonylcarbamoyladenylate + adenosine(37) in tRNA = N(6)-L-threonylcarbamoyladenosine(37) in tRNA + AMP + H(+)</text>
        <dbReference type="Rhea" id="RHEA:37059"/>
        <dbReference type="Rhea" id="RHEA-COMP:10162"/>
        <dbReference type="Rhea" id="RHEA-COMP:10163"/>
        <dbReference type="ChEBI" id="CHEBI:15378"/>
        <dbReference type="ChEBI" id="CHEBI:73682"/>
        <dbReference type="ChEBI" id="CHEBI:74411"/>
        <dbReference type="ChEBI" id="CHEBI:74418"/>
        <dbReference type="ChEBI" id="CHEBI:456215"/>
        <dbReference type="EC" id="2.3.1.234"/>
    </reaction>
</comment>
<comment type="cofactor">
    <cofactor evidence="1">
        <name>Fe(2+)</name>
        <dbReference type="ChEBI" id="CHEBI:29033"/>
    </cofactor>
    <text evidence="1">Binds 1 Fe(2+) ion per subunit.</text>
</comment>
<comment type="subcellular location">
    <subcellularLocation>
        <location evidence="1">Cytoplasm</location>
    </subcellularLocation>
</comment>
<comment type="similarity">
    <text evidence="1">Belongs to the KAE1 / TsaD family.</text>
</comment>
<sequence>MTDRYILAVESSCDETSVAILKNESTLLSNVIASQVESHKRFGGVVPEVASRHHVEVITTCFEDALQEAGISASDLSAVAVTYGPGLVGALLVGLAAAKAFAWANHLPLIPVNHMAGHLMAAREQEPLVYPLIALLVSGGHTELVYVPEPGDYHIIGETRDDAVGEAYDKVGRVMGLTYPAGREIDQLAHKGQDTYHFPRAMITEDHLEFSFSGLKSAFINVHHNAKQKGDELILEDLCASFQAAVLDILLAKTKKALSRYPAKMLVVAGGVAANQGLRDRLAQEITHIEVVIPKLRLCGDNAGMIALAAAIEYDKQHFANMSLNAKPSLAFDQFPDSFVIN</sequence>
<keyword id="KW-0012">Acyltransferase</keyword>
<keyword id="KW-0963">Cytoplasm</keyword>
<keyword id="KW-0408">Iron</keyword>
<keyword id="KW-0479">Metal-binding</keyword>
<keyword id="KW-0808">Transferase</keyword>
<keyword id="KW-0819">tRNA processing</keyword>
<feature type="chain" id="PRO_0000303567" description="tRNA N6-adenosine threonylcarbamoyltransferase">
    <location>
        <begin position="1"/>
        <end position="342"/>
    </location>
</feature>
<feature type="binding site" evidence="1">
    <location>
        <position position="114"/>
    </location>
    <ligand>
        <name>Fe cation</name>
        <dbReference type="ChEBI" id="CHEBI:24875"/>
    </ligand>
</feature>
<feature type="binding site" evidence="1">
    <location>
        <position position="118"/>
    </location>
    <ligand>
        <name>Fe cation</name>
        <dbReference type="ChEBI" id="CHEBI:24875"/>
    </ligand>
</feature>
<feature type="binding site" evidence="1">
    <location>
        <begin position="136"/>
        <end position="140"/>
    </location>
    <ligand>
        <name>substrate</name>
    </ligand>
</feature>
<feature type="binding site" evidence="1">
    <location>
        <position position="169"/>
    </location>
    <ligand>
        <name>substrate</name>
    </ligand>
</feature>
<feature type="binding site" evidence="1">
    <location>
        <position position="182"/>
    </location>
    <ligand>
        <name>substrate</name>
    </ligand>
</feature>
<feature type="binding site" evidence="1">
    <location>
        <position position="186"/>
    </location>
    <ligand>
        <name>substrate</name>
    </ligand>
</feature>
<feature type="binding site" evidence="1">
    <location>
        <position position="275"/>
    </location>
    <ligand>
        <name>substrate</name>
    </ligand>
</feature>
<feature type="binding site" evidence="1">
    <location>
        <position position="301"/>
    </location>
    <ligand>
        <name>Fe cation</name>
        <dbReference type="ChEBI" id="CHEBI:24875"/>
    </ligand>
</feature>
<dbReference type="EC" id="2.3.1.234" evidence="1"/>
<dbReference type="EMBL" id="AE009949">
    <property type="protein sequence ID" value="AAL98434.1"/>
    <property type="molecule type" value="Genomic_DNA"/>
</dbReference>
<dbReference type="RefSeq" id="WP_011018206.1">
    <property type="nucleotide sequence ID" value="NC_003485.1"/>
</dbReference>
<dbReference type="SMR" id="Q8NZG7"/>
<dbReference type="KEGG" id="spm:spyM18_1937"/>
<dbReference type="HOGENOM" id="CLU_023208_0_2_9"/>
<dbReference type="GO" id="GO:0005737">
    <property type="term" value="C:cytoplasm"/>
    <property type="evidence" value="ECO:0007669"/>
    <property type="project" value="UniProtKB-SubCell"/>
</dbReference>
<dbReference type="GO" id="GO:0005506">
    <property type="term" value="F:iron ion binding"/>
    <property type="evidence" value="ECO:0007669"/>
    <property type="project" value="UniProtKB-UniRule"/>
</dbReference>
<dbReference type="GO" id="GO:0061711">
    <property type="term" value="F:N(6)-L-threonylcarbamoyladenine synthase activity"/>
    <property type="evidence" value="ECO:0007669"/>
    <property type="project" value="UniProtKB-EC"/>
</dbReference>
<dbReference type="GO" id="GO:0002949">
    <property type="term" value="P:tRNA threonylcarbamoyladenosine modification"/>
    <property type="evidence" value="ECO:0007669"/>
    <property type="project" value="UniProtKB-UniRule"/>
</dbReference>
<dbReference type="CDD" id="cd24133">
    <property type="entry name" value="ASKHA_NBD_TsaD_bac"/>
    <property type="match status" value="1"/>
</dbReference>
<dbReference type="FunFam" id="3.30.420.40:FF:000012">
    <property type="entry name" value="tRNA N6-adenosine threonylcarbamoyltransferase"/>
    <property type="match status" value="1"/>
</dbReference>
<dbReference type="FunFam" id="3.30.420.40:FF:000040">
    <property type="entry name" value="tRNA N6-adenosine threonylcarbamoyltransferase"/>
    <property type="match status" value="1"/>
</dbReference>
<dbReference type="Gene3D" id="3.30.420.40">
    <property type="match status" value="2"/>
</dbReference>
<dbReference type="HAMAP" id="MF_01445">
    <property type="entry name" value="TsaD"/>
    <property type="match status" value="1"/>
</dbReference>
<dbReference type="InterPro" id="IPR043129">
    <property type="entry name" value="ATPase_NBD"/>
</dbReference>
<dbReference type="InterPro" id="IPR000905">
    <property type="entry name" value="Gcp-like_dom"/>
</dbReference>
<dbReference type="InterPro" id="IPR017861">
    <property type="entry name" value="KAE1/TsaD"/>
</dbReference>
<dbReference type="InterPro" id="IPR022450">
    <property type="entry name" value="TsaD"/>
</dbReference>
<dbReference type="NCBIfam" id="TIGR00329">
    <property type="entry name" value="gcp_kae1"/>
    <property type="match status" value="1"/>
</dbReference>
<dbReference type="NCBIfam" id="TIGR03723">
    <property type="entry name" value="T6A_TsaD_YgjD"/>
    <property type="match status" value="1"/>
</dbReference>
<dbReference type="PANTHER" id="PTHR11735">
    <property type="entry name" value="TRNA N6-ADENOSINE THREONYLCARBAMOYLTRANSFERASE"/>
    <property type="match status" value="1"/>
</dbReference>
<dbReference type="PANTHER" id="PTHR11735:SF6">
    <property type="entry name" value="TRNA N6-ADENOSINE THREONYLCARBAMOYLTRANSFERASE, MITOCHONDRIAL"/>
    <property type="match status" value="1"/>
</dbReference>
<dbReference type="Pfam" id="PF00814">
    <property type="entry name" value="TsaD"/>
    <property type="match status" value="1"/>
</dbReference>
<dbReference type="PRINTS" id="PR00789">
    <property type="entry name" value="OSIALOPTASE"/>
</dbReference>
<dbReference type="SUPFAM" id="SSF53067">
    <property type="entry name" value="Actin-like ATPase domain"/>
    <property type="match status" value="1"/>
</dbReference>
<evidence type="ECO:0000255" key="1">
    <source>
        <dbReference type="HAMAP-Rule" id="MF_01445"/>
    </source>
</evidence>
<proteinExistence type="inferred from homology"/>